<name>SBI_STAAT</name>
<protein>
    <recommendedName>
        <fullName>Immunoglobulin-binding protein Sbi</fullName>
    </recommendedName>
</protein>
<accession>A8YYG7</accession>
<sequence length="436" mass="50070">MKNKYISKLLVGAATITLATMISNGEAKASENTQQTSTKHQTTQNNYVTDQQKAFYQVLHLKGITEEQRNQYIKTLREHPERAQEVFSESLKDSKNPDRRVAQQNAFYNVLKNDNLTEQEKNNYIAQIKENPDRSQQVWVESVQSSKAKERQNIENADKAIKDFQDNKAPHDKSAAYEANSKLPKDLRDKNNRFVEKVSIEKAIVRHDERVKSANDAISKLNEKDSIENRRLAQREVNKAPMDVKEHLQKQLDALVAQKDAEKKVAPKVEAPQIQSPQIEKPKVESPKVEVPQIQSPKVEVPQSKLLGYYQSLKDSFNYGYKYLTDTYKSYKEKYDTAKYYYNTYYKYKGAIDQTVLTVLGSGSKSYIQPLKVDDKNGYLAKSYAQVRNYVTESINTGKVLYTFYQNPTLVKTAIKAQETASSIKNTLSNLLSFWK</sequence>
<dbReference type="EMBL" id="CP000730">
    <property type="protein sequence ID" value="ABX30391.1"/>
    <property type="molecule type" value="Genomic_DNA"/>
</dbReference>
<dbReference type="RefSeq" id="WP_000792564.1">
    <property type="nucleotide sequence ID" value="NC_010079.1"/>
</dbReference>
<dbReference type="SMR" id="A8YYG7"/>
<dbReference type="KEGG" id="sax:USA300HOU_2401"/>
<dbReference type="HOGENOM" id="CLU_051343_0_0_9"/>
<dbReference type="PRO" id="PR:A8YYG7"/>
<dbReference type="GO" id="GO:0005576">
    <property type="term" value="C:extracellular region"/>
    <property type="evidence" value="ECO:0007669"/>
    <property type="project" value="UniProtKB-SubCell"/>
</dbReference>
<dbReference type="GO" id="GO:0005886">
    <property type="term" value="C:plasma membrane"/>
    <property type="evidence" value="ECO:0007669"/>
    <property type="project" value="UniProtKB-SubCell"/>
</dbReference>
<dbReference type="GO" id="GO:0019864">
    <property type="term" value="F:IgG binding"/>
    <property type="evidence" value="ECO:0007669"/>
    <property type="project" value="UniProtKB-KW"/>
</dbReference>
<dbReference type="Gene3D" id="1.20.5.420">
    <property type="entry name" value="Immunoglobulin FC, subunit C"/>
    <property type="match status" value="2"/>
</dbReference>
<dbReference type="Gene3D" id="1.10.10.1270">
    <property type="entry name" value="Sbi, C3 binding domain IV"/>
    <property type="match status" value="1"/>
</dbReference>
<dbReference type="InterPro" id="IPR009063">
    <property type="entry name" value="Ig/albumin-bd_sf"/>
</dbReference>
<dbReference type="InterPro" id="IPR021657">
    <property type="entry name" value="IgG-binding_Sbi_dom_IV"/>
</dbReference>
<dbReference type="InterPro" id="IPR003132">
    <property type="entry name" value="Protein_A_Ig-bd"/>
</dbReference>
<dbReference type="InterPro" id="IPR041909">
    <property type="entry name" value="Sbi_C3_db_domIV"/>
</dbReference>
<dbReference type="Pfam" id="PF02216">
    <property type="entry name" value="B"/>
    <property type="match status" value="2"/>
</dbReference>
<dbReference type="Pfam" id="PF11621">
    <property type="entry name" value="Sbi-IV"/>
    <property type="match status" value="1"/>
</dbReference>
<dbReference type="SUPFAM" id="SSF46997">
    <property type="entry name" value="Bacterial immunoglobulin/albumin-binding domains"/>
    <property type="match status" value="2"/>
</dbReference>
<feature type="signal peptide" evidence="3">
    <location>
        <begin position="1"/>
        <end position="29"/>
    </location>
</feature>
<feature type="chain" id="PRO_0000361896" description="Immunoglobulin-binding protein Sbi">
    <location>
        <begin position="30"/>
        <end position="436"/>
    </location>
</feature>
<feature type="repeat" description="B 1">
    <location>
        <begin position="43"/>
        <end position="94"/>
    </location>
</feature>
<feature type="repeat" description="B 2">
    <location>
        <begin position="95"/>
        <end position="148"/>
    </location>
</feature>
<feature type="repeat" description="2-1">
    <location>
        <begin position="267"/>
        <end position="271"/>
    </location>
</feature>
<feature type="repeat" description="2-2">
    <location>
        <begin position="272"/>
        <end position="276"/>
    </location>
</feature>
<feature type="repeat" description="2-3">
    <location>
        <begin position="277"/>
        <end position="281"/>
    </location>
</feature>
<feature type="repeat" description="2-4">
    <location>
        <begin position="282"/>
        <end position="286"/>
    </location>
</feature>
<feature type="repeat" description="2-5">
    <location>
        <begin position="287"/>
        <end position="291"/>
    </location>
</feature>
<feature type="repeat" description="2-6">
    <location>
        <begin position="292"/>
        <end position="296"/>
    </location>
</feature>
<feature type="repeat" description="2-7">
    <location>
        <begin position="297"/>
        <end position="301"/>
    </location>
</feature>
<feature type="repeat" description="2-8">
    <location>
        <begin position="302"/>
        <end position="306"/>
    </location>
</feature>
<feature type="region of interest" description="Sbi-I">
    <location>
        <begin position="42"/>
        <end position="94"/>
    </location>
</feature>
<feature type="region of interest" description="Sbi-II">
    <location>
        <begin position="103"/>
        <end position="153"/>
    </location>
</feature>
<feature type="region of interest" description="Sbi-III">
    <location>
        <begin position="154"/>
        <end position="195"/>
    </location>
</feature>
<feature type="region of interest" description="Sbi-IV">
    <location>
        <begin position="196"/>
        <end position="253"/>
    </location>
</feature>
<feature type="region of interest" description="8 X 5 AA tandem repeat of P-[KQ]-[AISV]-[EKQ]-[AKLSV]">
    <location>
        <begin position="267"/>
        <end position="306"/>
    </location>
</feature>
<evidence type="ECO:0000250" key="1">
    <source>
        <dbReference type="UniProtKB" id="A6QJQ7"/>
    </source>
</evidence>
<evidence type="ECO:0000250" key="2">
    <source>
        <dbReference type="UniProtKB" id="Q931F4"/>
    </source>
</evidence>
<evidence type="ECO:0000255" key="3"/>
<evidence type="ECO:0000305" key="4"/>
<keyword id="KW-1003">Cell membrane</keyword>
<keyword id="KW-0390">IgG-binding protein</keyword>
<keyword id="KW-0472">Membrane</keyword>
<keyword id="KW-0677">Repeat</keyword>
<keyword id="KW-0964">Secreted</keyword>
<keyword id="KW-0732">Signal</keyword>
<keyword id="KW-0843">Virulence</keyword>
<proteinExistence type="inferred from homology"/>
<reference key="1">
    <citation type="journal article" date="2007" name="BMC Microbiol.">
        <title>Subtle genetic changes enhance virulence of methicillin resistant and sensitive Staphylococcus aureus.</title>
        <authorList>
            <person name="Highlander S.K."/>
            <person name="Hulten K.G."/>
            <person name="Qin X."/>
            <person name="Jiang H."/>
            <person name="Yerrapragada S."/>
            <person name="Mason E.O. Jr."/>
            <person name="Shang Y."/>
            <person name="Williams T.M."/>
            <person name="Fortunov R.M."/>
            <person name="Liu Y."/>
            <person name="Igboeli O."/>
            <person name="Petrosino J."/>
            <person name="Tirumalai M."/>
            <person name="Uzman A."/>
            <person name="Fox G.E."/>
            <person name="Cardenas A.M."/>
            <person name="Muzny D.M."/>
            <person name="Hemphill L."/>
            <person name="Ding Y."/>
            <person name="Dugan S."/>
            <person name="Blyth P.R."/>
            <person name="Buhay C.J."/>
            <person name="Dinh H.H."/>
            <person name="Hawes A.C."/>
            <person name="Holder M."/>
            <person name="Kovar C.L."/>
            <person name="Lee S.L."/>
            <person name="Liu W."/>
            <person name="Nazareth L.V."/>
            <person name="Wang Q."/>
            <person name="Zhou J."/>
            <person name="Kaplan S.L."/>
            <person name="Weinstock G.M."/>
        </authorList>
    </citation>
    <scope>NUCLEOTIDE SEQUENCE [LARGE SCALE GENOMIC DNA]</scope>
    <source>
        <strain>USA300 / TCH1516</strain>
    </source>
</reference>
<comment type="function">
    <text evidence="1">Plays a role in the inhibition of both the innate and adaptive immune responses. Possesses two N-terminal domains that bind the Fc region of IgG and two domains that form a tripartite complex with complement factors C3b and CFH. By recruiting CFH and C3b, the secreted form acts as a potent complement inhibitor of the alternative pathway-mediated lysis.</text>
</comment>
<comment type="subunit">
    <text evidence="1 2">Interacts (via sbi-I and sbi-II domains) with the Fc region of mammalian immunoglobulin G (IgG) proteins. Interacts (via sbi-III and sbi-IV domains) with host complement C3. Interacts (via sbi-III and sbi-IV domains) with host CFH (By similarity). Interacts (via sbi-IV domain) with beta-2-glycoprotein 1/APOH (By similarity).</text>
</comment>
<comment type="subcellular location">
    <subcellularLocation>
        <location evidence="1">Secreted</location>
    </subcellularLocation>
    <subcellularLocation>
        <location evidence="1">Cell membrane</location>
    </subcellularLocation>
    <text evidence="1">Occurs both extracellularly and associated with the cytoplasmic membrane where only the domains I and II are exposed to the extracellular media. Membrane association occurs via binding to lipoteichoic acid.</text>
</comment>
<comment type="domain">
    <text evidence="1">Sbi-I and sbi-II domains provide protection only when anchored to the cell surface, whereas only the secreted sbi-III and sbi-IV domains are biologically active.</text>
</comment>
<comment type="similarity">
    <text evidence="4">Belongs to the immunoglobulin-binding protein Sbi family.</text>
</comment>
<organism>
    <name type="scientific">Staphylococcus aureus (strain USA300 / TCH1516)</name>
    <dbReference type="NCBI Taxonomy" id="451516"/>
    <lineage>
        <taxon>Bacteria</taxon>
        <taxon>Bacillati</taxon>
        <taxon>Bacillota</taxon>
        <taxon>Bacilli</taxon>
        <taxon>Bacillales</taxon>
        <taxon>Staphylococcaceae</taxon>
        <taxon>Staphylococcus</taxon>
    </lineage>
</organism>
<gene>
    <name type="primary">sbi</name>
    <name type="ordered locus">USA300HOU_2401</name>
</gene>